<comment type="function">
    <text evidence="6">Transduces signals from the phototaxis receptor sensory rhodopsin II (SR-II) to the flagellar motor. Responds to light changes through the variation of the level of methylation. Also acts as a chemotransducer.</text>
</comment>
<comment type="subcellular location">
    <subcellularLocation>
        <location evidence="1">Cell membrane</location>
        <topology evidence="1">Multi-pass membrane protein</topology>
    </subcellularLocation>
</comment>
<comment type="PTM">
    <text evidence="1">Methylated by CheR.</text>
</comment>
<comment type="similarity">
    <text evidence="7">Belongs to the methyl-accepting chemotaxis (MCP) protein family.</text>
</comment>
<keyword id="KW-1003">Cell membrane</keyword>
<keyword id="KW-0145">Chemotaxis</keyword>
<keyword id="KW-0157">Chromophore</keyword>
<keyword id="KW-0472">Membrane</keyword>
<keyword id="KW-0488">Methylation</keyword>
<keyword id="KW-0600">Photoreceptor protein</keyword>
<keyword id="KW-0675">Receptor</keyword>
<keyword id="KW-1185">Reference proteome</keyword>
<keyword id="KW-0677">Repeat</keyword>
<keyword id="KW-0716">Sensory transduction</keyword>
<keyword id="KW-0807">Transducer</keyword>
<keyword id="KW-0812">Transmembrane</keyword>
<keyword id="KW-1133">Transmembrane helix</keyword>
<accession>Q9HP81</accession>
<accession>P71410</accession>
<gene>
    <name type="primary">htr2</name>
    <name type="synonym">htrII</name>
    <name type="ordered locus">VNG_1765G</name>
</gene>
<sequence>MGSGLVARIRGSYGTKLTLALVVVVVLSVGVGTFVYQQTTTQLETDVRADLTGSADARADHLDAWLSNARGQTQLASRHPVLASGNDTAITRYLEGLAASDERPDGVVAAHVYNTSTTTIEASSADAFTGVNPREQGAPFATDPPSFATTSDVVVAAPFTVPAADFPVLSVLSPIPGTTDKALIYMVNVNTLTDDFGQNVAGSTTTVVSADGTYVSHPDQDRVLTGHDGPSRLLNQSRTQPAYIDANGTVTAAAPVDGAPWSVLVRAPHDRAFALGDFVASSLVGLVLITIVSLSLIGVTVGSTTVTALRQFSRRADEMAAGDLDTDIDTSRNDEFGTLAESFRSMRDSLSESLTDAERATARAEDAREDAEQQRADAEAAREDAEAARKDAQETARALESAAADYEEALTAVADGDLTRRVDASRDHDAMARIGHALNDMLDDIETSVAAATAFSDHVSDAAQRVEADAGDAIDAGTDVSTAVDEISDGATEQTDRLHEVAGEVDDLSASAEEVAETVASLADTAGQAASAVDDGRQATEDAVETMDDVADDAEAAADAMDALDSEMADIGEIVDVIADIADQTNMLALNASIEAARTGADGDGFAVVADEVKTLAEESRDAAEDIESRLLALQGQVSDVADEMRATSDTVSDGRATVGDAATALDDVVSFVADTDTAAGEIRAATDRQAHAASRVASAVDEVAGISQETAAQATAVADSAATQTDTLSSVDDAAADLADRAAALDDLLAEFDAHDDTEPEDY</sequence>
<reference key="1">
    <citation type="journal article" date="1996" name="Proc. Natl. Acad. Sci. U.S.A.">
        <title>The primary structures of the Archaeon Halobacterium salinarium blue light receptor sensory rhodopsin II and its transducer, a methyl-accepting protein.</title>
        <authorList>
            <person name="Zhang W."/>
            <person name="Brooun A."/>
            <person name="Mueller M.M."/>
            <person name="Alam M."/>
        </authorList>
    </citation>
    <scope>NUCLEOTIDE SEQUENCE [GENOMIC DNA]</scope>
    <source>
        <strain>Flx15</strain>
    </source>
</reference>
<reference key="2">
    <citation type="journal article" date="2000" name="Proc. Natl. Acad. Sci. U.S.A.">
        <title>Genome sequence of Halobacterium species NRC-1.</title>
        <authorList>
            <person name="Ng W.V."/>
            <person name="Kennedy S.P."/>
            <person name="Mahairas G.G."/>
            <person name="Berquist B."/>
            <person name="Pan M."/>
            <person name="Shukla H.D."/>
            <person name="Lasky S.R."/>
            <person name="Baliga N.S."/>
            <person name="Thorsson V."/>
            <person name="Sbrogna J."/>
            <person name="Swartzell S."/>
            <person name="Weir D."/>
            <person name="Hall J."/>
            <person name="Dahl T.A."/>
            <person name="Welti R."/>
            <person name="Goo Y.A."/>
            <person name="Leithauser B."/>
            <person name="Keller K."/>
            <person name="Cruz R."/>
            <person name="Danson M.J."/>
            <person name="Hough D.W."/>
            <person name="Maddocks D.G."/>
            <person name="Jablonski P.E."/>
            <person name="Krebs M.P."/>
            <person name="Angevine C.M."/>
            <person name="Dale H."/>
            <person name="Isenbarger T.A."/>
            <person name="Peck R.F."/>
            <person name="Pohlschroder M."/>
            <person name="Spudich J.L."/>
            <person name="Jung K.-H."/>
            <person name="Alam M."/>
            <person name="Freitas T."/>
            <person name="Hou S."/>
            <person name="Daniels C.J."/>
            <person name="Dennis P.P."/>
            <person name="Omer A.D."/>
            <person name="Ebhardt H."/>
            <person name="Lowe T.M."/>
            <person name="Liang P."/>
            <person name="Riley M."/>
            <person name="Hood L."/>
            <person name="DasSarma S."/>
        </authorList>
    </citation>
    <scope>NUCLEOTIDE SEQUENCE [LARGE SCALE GENOMIC DNA]</scope>
    <source>
        <strain>ATCC 700922 / JCM 11081 / NRC-1</strain>
    </source>
</reference>
<reference key="3">
    <citation type="journal article" date="1998" name="J. Bacteriol.">
        <title>Sensory rhodopsin II transducer HtrII is also responsible for serine chemotaxis in the archaeon Halobacterium salinarum.</title>
        <authorList>
            <person name="Hou S."/>
            <person name="Brooun A."/>
            <person name="Yu H.S."/>
            <person name="Freitas T."/>
            <person name="Alam M."/>
        </authorList>
    </citation>
    <scope>FUNCTION</scope>
</reference>
<protein>
    <recommendedName>
        <fullName>Sensory rhodopsin II transducer</fullName>
    </recommendedName>
    <alternativeName>
        <fullName>HTR-II</fullName>
    </alternativeName>
    <alternativeName>
        <fullName>Methyl-accepting phototaxis protein II</fullName>
        <shortName>MPP-II</shortName>
    </alternativeName>
</protein>
<feature type="initiator methionine" description="Removed" evidence="1">
    <location>
        <position position="1"/>
    </location>
</feature>
<feature type="chain" id="PRO_0000110549" description="Sensory rhodopsin II transducer">
    <location>
        <begin position="2"/>
        <end position="764"/>
    </location>
</feature>
<feature type="topological domain" description="Cytoplasmic" evidence="2">
    <location>
        <begin position="2"/>
        <end position="16"/>
    </location>
</feature>
<feature type="transmembrane region" description="Helical" evidence="2">
    <location>
        <begin position="17"/>
        <end position="37"/>
    </location>
</feature>
<feature type="topological domain" description="Extracellular" evidence="2">
    <location>
        <begin position="38"/>
        <end position="278"/>
    </location>
</feature>
<feature type="transmembrane region" description="Helical" evidence="2">
    <location>
        <begin position="279"/>
        <end position="298"/>
    </location>
</feature>
<feature type="topological domain" description="Cytoplasmic" evidence="2">
    <location>
        <begin position="299"/>
        <end position="764"/>
    </location>
</feature>
<feature type="domain" description="HAMP 1" evidence="3">
    <location>
        <begin position="303"/>
        <end position="355"/>
    </location>
</feature>
<feature type="domain" description="HAMP 2" evidence="3">
    <location>
        <begin position="397"/>
        <end position="450"/>
    </location>
</feature>
<feature type="domain" description="Methyl-accepting transducer" evidence="4">
    <location>
        <begin position="469"/>
        <end position="705"/>
    </location>
</feature>
<feature type="region of interest" description="Disordered" evidence="5">
    <location>
        <begin position="347"/>
        <end position="401"/>
    </location>
</feature>
<feature type="compositionally biased region" description="Basic and acidic residues" evidence="5">
    <location>
        <begin position="347"/>
        <end position="394"/>
    </location>
</feature>
<feature type="sequence conflict" description="In Ref. 1; AAC44369." evidence="7" ref="1">
    <original>VVAA</original>
    <variation>RWFAG</variation>
    <location>
        <begin position="107"/>
        <end position="110"/>
    </location>
</feature>
<feature type="sequence conflict" description="In Ref. 1; AAC44369." evidence="7" ref="1">
    <original>E</original>
    <variation>Q</variation>
    <location>
        <position position="682"/>
    </location>
</feature>
<evidence type="ECO:0000250" key="1"/>
<evidence type="ECO:0000255" key="2"/>
<evidence type="ECO:0000255" key="3">
    <source>
        <dbReference type="PROSITE-ProRule" id="PRU00102"/>
    </source>
</evidence>
<evidence type="ECO:0000255" key="4">
    <source>
        <dbReference type="PROSITE-ProRule" id="PRU00284"/>
    </source>
</evidence>
<evidence type="ECO:0000256" key="5">
    <source>
        <dbReference type="SAM" id="MobiDB-lite"/>
    </source>
</evidence>
<evidence type="ECO:0000269" key="6">
    <source>
    </source>
</evidence>
<evidence type="ECO:0000305" key="7"/>
<proteinExistence type="inferred from homology"/>
<name>HTR2_HALSA</name>
<organism>
    <name type="scientific">Halobacterium salinarum (strain ATCC 700922 / JCM 11081 / NRC-1)</name>
    <name type="common">Halobacterium halobium</name>
    <dbReference type="NCBI Taxonomy" id="64091"/>
    <lineage>
        <taxon>Archaea</taxon>
        <taxon>Methanobacteriati</taxon>
        <taxon>Methanobacteriota</taxon>
        <taxon>Stenosarchaea group</taxon>
        <taxon>Halobacteria</taxon>
        <taxon>Halobacteriales</taxon>
        <taxon>Halobacteriaceae</taxon>
        <taxon>Halobacterium</taxon>
        <taxon>Halobacterium salinarum NRC-34001</taxon>
    </lineage>
</organism>
<dbReference type="EMBL" id="U62676">
    <property type="protein sequence ID" value="AAC44369.1"/>
    <property type="molecule type" value="Genomic_DNA"/>
</dbReference>
<dbReference type="EMBL" id="AE004437">
    <property type="protein sequence ID" value="AAG19989.1"/>
    <property type="molecule type" value="Genomic_DNA"/>
</dbReference>
<dbReference type="PIR" id="A84328">
    <property type="entry name" value="A84328"/>
</dbReference>
<dbReference type="PIR" id="T44946">
    <property type="entry name" value="T44946"/>
</dbReference>
<dbReference type="RefSeq" id="WP_010903287.1">
    <property type="nucleotide sequence ID" value="NC_002607.1"/>
</dbReference>
<dbReference type="SMR" id="Q9HP81"/>
<dbReference type="STRING" id="64091.VNG_1765G"/>
<dbReference type="PaxDb" id="64091-VNG_1765G"/>
<dbReference type="GeneID" id="68694407"/>
<dbReference type="KEGG" id="hal:VNG_1765G"/>
<dbReference type="PATRIC" id="fig|64091.14.peg.1344"/>
<dbReference type="HOGENOM" id="CLU_000445_107_19_2"/>
<dbReference type="InParanoid" id="Q9HP81"/>
<dbReference type="OrthoDB" id="8523at2157"/>
<dbReference type="PhylomeDB" id="Q9HP81"/>
<dbReference type="Proteomes" id="UP000000554">
    <property type="component" value="Chromosome"/>
</dbReference>
<dbReference type="GO" id="GO:0005886">
    <property type="term" value="C:plasma membrane"/>
    <property type="evidence" value="ECO:0007669"/>
    <property type="project" value="UniProtKB-SubCell"/>
</dbReference>
<dbReference type="GO" id="GO:0009881">
    <property type="term" value="F:photoreceptor activity"/>
    <property type="evidence" value="ECO:0007669"/>
    <property type="project" value="UniProtKB-KW"/>
</dbReference>
<dbReference type="GO" id="GO:0006935">
    <property type="term" value="P:chemotaxis"/>
    <property type="evidence" value="ECO:0000318"/>
    <property type="project" value="GO_Central"/>
</dbReference>
<dbReference type="GO" id="GO:0007165">
    <property type="term" value="P:signal transduction"/>
    <property type="evidence" value="ECO:0007669"/>
    <property type="project" value="UniProtKB-KW"/>
</dbReference>
<dbReference type="CDD" id="cd06225">
    <property type="entry name" value="HAMP"/>
    <property type="match status" value="2"/>
</dbReference>
<dbReference type="CDD" id="cd11386">
    <property type="entry name" value="MCP_signal"/>
    <property type="match status" value="1"/>
</dbReference>
<dbReference type="CDD" id="cd18774">
    <property type="entry name" value="PDC2_HK_sensor"/>
    <property type="match status" value="1"/>
</dbReference>
<dbReference type="Gene3D" id="6.10.250.1910">
    <property type="match status" value="1"/>
</dbReference>
<dbReference type="Gene3D" id="1.10.287.950">
    <property type="entry name" value="Methyl-accepting chemotaxis protein"/>
    <property type="match status" value="1"/>
</dbReference>
<dbReference type="InterPro" id="IPR003660">
    <property type="entry name" value="HAMP_dom"/>
</dbReference>
<dbReference type="InterPro" id="IPR004089">
    <property type="entry name" value="MCPsignal_dom"/>
</dbReference>
<dbReference type="PANTHER" id="PTHR32089:SF112">
    <property type="entry name" value="LYSOZYME-LIKE PROTEIN-RELATED"/>
    <property type="match status" value="1"/>
</dbReference>
<dbReference type="PANTHER" id="PTHR32089">
    <property type="entry name" value="METHYL-ACCEPTING CHEMOTAXIS PROTEIN MCPB"/>
    <property type="match status" value="1"/>
</dbReference>
<dbReference type="Pfam" id="PF00672">
    <property type="entry name" value="HAMP"/>
    <property type="match status" value="2"/>
</dbReference>
<dbReference type="Pfam" id="PF00015">
    <property type="entry name" value="MCPsignal"/>
    <property type="match status" value="1"/>
</dbReference>
<dbReference type="SMART" id="SM00304">
    <property type="entry name" value="HAMP"/>
    <property type="match status" value="2"/>
</dbReference>
<dbReference type="SMART" id="SM00283">
    <property type="entry name" value="MA"/>
    <property type="match status" value="1"/>
</dbReference>
<dbReference type="SUPFAM" id="SSF158472">
    <property type="entry name" value="HAMP domain-like"/>
    <property type="match status" value="1"/>
</dbReference>
<dbReference type="SUPFAM" id="SSF58104">
    <property type="entry name" value="Methyl-accepting chemotaxis protein (MCP) signaling domain"/>
    <property type="match status" value="2"/>
</dbReference>
<dbReference type="PROSITE" id="PS50111">
    <property type="entry name" value="CHEMOTAXIS_TRANSDUC_2"/>
    <property type="match status" value="1"/>
</dbReference>
<dbReference type="PROSITE" id="PS50885">
    <property type="entry name" value="HAMP"/>
    <property type="match status" value="2"/>
</dbReference>